<feature type="chain" id="PRO_0000338786" description="Translation initiation factor IF-1 2">
    <location>
        <begin position="1"/>
        <end position="72"/>
    </location>
</feature>
<feature type="domain" description="S1-like" evidence="1">
    <location>
        <begin position="1"/>
        <end position="72"/>
    </location>
</feature>
<reference key="1">
    <citation type="journal article" date="2010" name="Genome Biol. Evol.">
        <title>Continuing evolution of Burkholderia mallei through genome reduction and large-scale rearrangements.</title>
        <authorList>
            <person name="Losada L."/>
            <person name="Ronning C.M."/>
            <person name="DeShazer D."/>
            <person name="Woods D."/>
            <person name="Fedorova N."/>
            <person name="Kim H.S."/>
            <person name="Shabalina S.A."/>
            <person name="Pearson T.R."/>
            <person name="Brinkac L."/>
            <person name="Tan P."/>
            <person name="Nandi T."/>
            <person name="Crabtree J."/>
            <person name="Badger J."/>
            <person name="Beckstrom-Sternberg S."/>
            <person name="Saqib M."/>
            <person name="Schutzer S.E."/>
            <person name="Keim P."/>
            <person name="Nierman W.C."/>
        </authorList>
    </citation>
    <scope>NUCLEOTIDE SEQUENCE [LARGE SCALE GENOMIC DNA]</scope>
    <source>
        <strain>668</strain>
    </source>
</reference>
<accession>A3NEF8</accession>
<organism>
    <name type="scientific">Burkholderia pseudomallei (strain 668)</name>
    <dbReference type="NCBI Taxonomy" id="320373"/>
    <lineage>
        <taxon>Bacteria</taxon>
        <taxon>Pseudomonadati</taxon>
        <taxon>Pseudomonadota</taxon>
        <taxon>Betaproteobacteria</taxon>
        <taxon>Burkholderiales</taxon>
        <taxon>Burkholderiaceae</taxon>
        <taxon>Burkholderia</taxon>
        <taxon>pseudomallei group</taxon>
    </lineage>
</organism>
<dbReference type="EMBL" id="CP000570">
    <property type="protein sequence ID" value="ABN84064.1"/>
    <property type="molecule type" value="Genomic_DNA"/>
</dbReference>
<dbReference type="BMRB" id="A3NEF8"/>
<dbReference type="SMR" id="A3NEF8"/>
<dbReference type="KEGG" id="bpd:BURPS668_3725"/>
<dbReference type="HOGENOM" id="CLU_151267_1_0_4"/>
<dbReference type="GO" id="GO:0005829">
    <property type="term" value="C:cytosol"/>
    <property type="evidence" value="ECO:0007669"/>
    <property type="project" value="TreeGrafter"/>
</dbReference>
<dbReference type="GO" id="GO:0043022">
    <property type="term" value="F:ribosome binding"/>
    <property type="evidence" value="ECO:0007669"/>
    <property type="project" value="UniProtKB-UniRule"/>
</dbReference>
<dbReference type="GO" id="GO:0019843">
    <property type="term" value="F:rRNA binding"/>
    <property type="evidence" value="ECO:0007669"/>
    <property type="project" value="UniProtKB-UniRule"/>
</dbReference>
<dbReference type="GO" id="GO:0003743">
    <property type="term" value="F:translation initiation factor activity"/>
    <property type="evidence" value="ECO:0007669"/>
    <property type="project" value="UniProtKB-UniRule"/>
</dbReference>
<dbReference type="CDD" id="cd04451">
    <property type="entry name" value="S1_IF1"/>
    <property type="match status" value="1"/>
</dbReference>
<dbReference type="FunFam" id="2.40.50.140:FF:000002">
    <property type="entry name" value="Translation initiation factor IF-1"/>
    <property type="match status" value="1"/>
</dbReference>
<dbReference type="Gene3D" id="2.40.50.140">
    <property type="entry name" value="Nucleic acid-binding proteins"/>
    <property type="match status" value="1"/>
</dbReference>
<dbReference type="HAMAP" id="MF_00075">
    <property type="entry name" value="IF_1"/>
    <property type="match status" value="1"/>
</dbReference>
<dbReference type="InterPro" id="IPR012340">
    <property type="entry name" value="NA-bd_OB-fold"/>
</dbReference>
<dbReference type="InterPro" id="IPR006196">
    <property type="entry name" value="RNA-binding_domain_S1_IF1"/>
</dbReference>
<dbReference type="InterPro" id="IPR003029">
    <property type="entry name" value="S1_domain"/>
</dbReference>
<dbReference type="InterPro" id="IPR004368">
    <property type="entry name" value="TIF_IF1"/>
</dbReference>
<dbReference type="NCBIfam" id="TIGR00008">
    <property type="entry name" value="infA"/>
    <property type="match status" value="1"/>
</dbReference>
<dbReference type="PANTHER" id="PTHR33370">
    <property type="entry name" value="TRANSLATION INITIATION FACTOR IF-1, CHLOROPLASTIC"/>
    <property type="match status" value="1"/>
</dbReference>
<dbReference type="PANTHER" id="PTHR33370:SF1">
    <property type="entry name" value="TRANSLATION INITIATION FACTOR IF-1, CHLOROPLASTIC"/>
    <property type="match status" value="1"/>
</dbReference>
<dbReference type="Pfam" id="PF01176">
    <property type="entry name" value="eIF-1a"/>
    <property type="match status" value="1"/>
</dbReference>
<dbReference type="SMART" id="SM00316">
    <property type="entry name" value="S1"/>
    <property type="match status" value="1"/>
</dbReference>
<dbReference type="SUPFAM" id="SSF50249">
    <property type="entry name" value="Nucleic acid-binding proteins"/>
    <property type="match status" value="1"/>
</dbReference>
<dbReference type="PROSITE" id="PS50832">
    <property type="entry name" value="S1_IF1_TYPE"/>
    <property type="match status" value="1"/>
</dbReference>
<comment type="function">
    <text evidence="1">One of the essential components for the initiation of protein synthesis. Stabilizes the binding of IF-2 and IF-3 on the 30S subunit to which N-formylmethionyl-tRNA(fMet) subsequently binds. Helps modulate mRNA selection, yielding the 30S pre-initiation complex (PIC). Upon addition of the 50S ribosomal subunit IF-1, IF-2 and IF-3 are released leaving the mature 70S translation initiation complex.</text>
</comment>
<comment type="subunit">
    <text evidence="1">Component of the 30S ribosomal translation pre-initiation complex which assembles on the 30S ribosome in the order IF-2 and IF-3, IF-1 and N-formylmethionyl-tRNA(fMet); mRNA recruitment can occur at any time during PIC assembly.</text>
</comment>
<comment type="subcellular location">
    <subcellularLocation>
        <location evidence="1">Cytoplasm</location>
    </subcellularLocation>
</comment>
<comment type="similarity">
    <text evidence="1">Belongs to the IF-1 family.</text>
</comment>
<protein>
    <recommendedName>
        <fullName evidence="1">Translation initiation factor IF-1 2</fullName>
    </recommendedName>
</protein>
<proteinExistence type="inferred from homology"/>
<sequence>MAKDDVIQMQGEVIENLPNATFRVKLENGHVVLGHISGKMRMHYIRILPGDKVTVELTPYDLSRARIVFRAK</sequence>
<name>IF12_BURP6</name>
<gene>
    <name evidence="1" type="primary">infA2</name>
    <name type="ordered locus">BURPS668_3725</name>
</gene>
<keyword id="KW-0963">Cytoplasm</keyword>
<keyword id="KW-0396">Initiation factor</keyword>
<keyword id="KW-0648">Protein biosynthesis</keyword>
<keyword id="KW-0694">RNA-binding</keyword>
<keyword id="KW-0699">rRNA-binding</keyword>
<evidence type="ECO:0000255" key="1">
    <source>
        <dbReference type="HAMAP-Rule" id="MF_00075"/>
    </source>
</evidence>